<dbReference type="EC" id="2.7.11.1"/>
<dbReference type="EMBL" id="AF232236">
    <property type="protein sequence ID" value="AAF40202.1"/>
    <property type="molecule type" value="mRNA"/>
</dbReference>
<dbReference type="EMBL" id="AC004077">
    <property type="protein sequence ID" value="AAC26704.1"/>
    <property type="molecule type" value="Genomic_DNA"/>
</dbReference>
<dbReference type="EMBL" id="CP002685">
    <property type="protein sequence ID" value="AEC09003.1"/>
    <property type="molecule type" value="Genomic_DNA"/>
</dbReference>
<dbReference type="PIR" id="C84759">
    <property type="entry name" value="C84759"/>
</dbReference>
<dbReference type="RefSeq" id="NP_181012.1">
    <property type="nucleotide sequence ID" value="NM_129019.5"/>
</dbReference>
<dbReference type="SMR" id="O64682"/>
<dbReference type="BioGRID" id="3376">
    <property type="interactions" value="5"/>
</dbReference>
<dbReference type="DIP" id="DIP-39595N"/>
<dbReference type="FunCoup" id="O64682">
    <property type="interactions" value="128"/>
</dbReference>
<dbReference type="IntAct" id="O64682">
    <property type="interactions" value="7"/>
</dbReference>
<dbReference type="STRING" id="3702.O64682"/>
<dbReference type="iPTMnet" id="O64682"/>
<dbReference type="PaxDb" id="3702-AT2G34650.1"/>
<dbReference type="ProteomicsDB" id="235087"/>
<dbReference type="EnsemblPlants" id="AT2G34650.1">
    <property type="protein sequence ID" value="AT2G34650.1"/>
    <property type="gene ID" value="AT2G34650"/>
</dbReference>
<dbReference type="GeneID" id="818030"/>
<dbReference type="Gramene" id="AT2G34650.1">
    <property type="protein sequence ID" value="AT2G34650.1"/>
    <property type="gene ID" value="AT2G34650"/>
</dbReference>
<dbReference type="KEGG" id="ath:AT2G34650"/>
<dbReference type="Araport" id="AT2G34650"/>
<dbReference type="TAIR" id="AT2G34650">
    <property type="gene designation" value="PID"/>
</dbReference>
<dbReference type="eggNOG" id="KOG0610">
    <property type="taxonomic scope" value="Eukaryota"/>
</dbReference>
<dbReference type="HOGENOM" id="CLU_000288_63_30_1"/>
<dbReference type="InParanoid" id="O64682"/>
<dbReference type="OMA" id="PFAKFNS"/>
<dbReference type="PhylomeDB" id="O64682"/>
<dbReference type="PRO" id="PR:O64682"/>
<dbReference type="Proteomes" id="UP000006548">
    <property type="component" value="Chromosome 2"/>
</dbReference>
<dbReference type="ExpressionAtlas" id="O64682">
    <property type="expression patterns" value="baseline and differential"/>
</dbReference>
<dbReference type="GO" id="GO:0016324">
    <property type="term" value="C:apical plasma membrane"/>
    <property type="evidence" value="ECO:0000314"/>
    <property type="project" value="UniProtKB"/>
</dbReference>
<dbReference type="GO" id="GO:0071944">
    <property type="term" value="C:cell periphery"/>
    <property type="evidence" value="ECO:0000314"/>
    <property type="project" value="UniProtKB"/>
</dbReference>
<dbReference type="GO" id="GO:0009986">
    <property type="term" value="C:cell surface"/>
    <property type="evidence" value="ECO:0000314"/>
    <property type="project" value="TAIR"/>
</dbReference>
<dbReference type="GO" id="GO:0005829">
    <property type="term" value="C:cytosol"/>
    <property type="evidence" value="ECO:0007669"/>
    <property type="project" value="UniProtKB-SubCell"/>
</dbReference>
<dbReference type="GO" id="GO:0005886">
    <property type="term" value="C:plasma membrane"/>
    <property type="evidence" value="ECO:0000314"/>
    <property type="project" value="UniProtKB"/>
</dbReference>
<dbReference type="GO" id="GO:0005524">
    <property type="term" value="F:ATP binding"/>
    <property type="evidence" value="ECO:0007669"/>
    <property type="project" value="UniProtKB-KW"/>
</dbReference>
<dbReference type="GO" id="GO:0016301">
    <property type="term" value="F:kinase activity"/>
    <property type="evidence" value="ECO:0000250"/>
    <property type="project" value="TAIR"/>
</dbReference>
<dbReference type="GO" id="GO:0004672">
    <property type="term" value="F:protein kinase activity"/>
    <property type="evidence" value="ECO:0000314"/>
    <property type="project" value="TAIR"/>
</dbReference>
<dbReference type="GO" id="GO:0106310">
    <property type="term" value="F:protein serine kinase activity"/>
    <property type="evidence" value="ECO:0007669"/>
    <property type="project" value="RHEA"/>
</dbReference>
<dbReference type="GO" id="GO:0004674">
    <property type="term" value="F:protein serine/threonine kinase activity"/>
    <property type="evidence" value="ECO:0000314"/>
    <property type="project" value="TAIR"/>
</dbReference>
<dbReference type="GO" id="GO:0009926">
    <property type="term" value="P:auxin polar transport"/>
    <property type="evidence" value="ECO:0000315"/>
    <property type="project" value="TAIR"/>
</dbReference>
<dbReference type="GO" id="GO:0009734">
    <property type="term" value="P:auxin-activated signaling pathway"/>
    <property type="evidence" value="ECO:0000315"/>
    <property type="project" value="TAIR"/>
</dbReference>
<dbReference type="GO" id="GO:0048825">
    <property type="term" value="P:cotyledon development"/>
    <property type="evidence" value="ECO:0000316"/>
    <property type="project" value="UniProtKB"/>
</dbReference>
<dbReference type="GO" id="GO:0048827">
    <property type="term" value="P:phyllome development"/>
    <property type="evidence" value="ECO:0000316"/>
    <property type="project" value="TAIR"/>
</dbReference>
<dbReference type="GO" id="GO:0009958">
    <property type="term" value="P:positive gravitropism"/>
    <property type="evidence" value="ECO:0000315"/>
    <property type="project" value="TAIR"/>
</dbReference>
<dbReference type="GO" id="GO:0009733">
    <property type="term" value="P:response to auxin"/>
    <property type="evidence" value="ECO:0000270"/>
    <property type="project" value="TAIR"/>
</dbReference>
<dbReference type="GO" id="GO:0048767">
    <property type="term" value="P:root hair elongation"/>
    <property type="evidence" value="ECO:0000315"/>
    <property type="project" value="TAIR"/>
</dbReference>
<dbReference type="GO" id="GO:0048766">
    <property type="term" value="P:root hair initiation"/>
    <property type="evidence" value="ECO:0000315"/>
    <property type="project" value="TAIR"/>
</dbReference>
<dbReference type="CDD" id="cd05574">
    <property type="entry name" value="STKc_phototropin_like"/>
    <property type="match status" value="1"/>
</dbReference>
<dbReference type="FunFam" id="1.10.510.10:FF:000277">
    <property type="entry name" value="protein kinase PINOID"/>
    <property type="match status" value="1"/>
</dbReference>
<dbReference type="FunFam" id="3.30.200.20:FF:000351">
    <property type="entry name" value="protein kinase PINOID 2"/>
    <property type="match status" value="1"/>
</dbReference>
<dbReference type="FunFam" id="1.10.510.10:FF:000020">
    <property type="entry name" value="serine/threonine-protein kinase D6PK-like"/>
    <property type="match status" value="1"/>
</dbReference>
<dbReference type="Gene3D" id="3.30.200.20">
    <property type="entry name" value="Phosphorylase Kinase, domain 1"/>
    <property type="match status" value="1"/>
</dbReference>
<dbReference type="Gene3D" id="1.10.510.10">
    <property type="entry name" value="Transferase(Phosphotransferase) domain 1"/>
    <property type="match status" value="1"/>
</dbReference>
<dbReference type="InterPro" id="IPR011009">
    <property type="entry name" value="Kinase-like_dom_sf"/>
</dbReference>
<dbReference type="InterPro" id="IPR000719">
    <property type="entry name" value="Prot_kinase_dom"/>
</dbReference>
<dbReference type="InterPro" id="IPR008271">
    <property type="entry name" value="Ser/Thr_kinase_AS"/>
</dbReference>
<dbReference type="PANTHER" id="PTHR45637">
    <property type="entry name" value="FLIPPASE KINASE 1-RELATED"/>
    <property type="match status" value="1"/>
</dbReference>
<dbReference type="Pfam" id="PF00069">
    <property type="entry name" value="Pkinase"/>
    <property type="match status" value="2"/>
</dbReference>
<dbReference type="SMART" id="SM00220">
    <property type="entry name" value="S_TKc"/>
    <property type="match status" value="1"/>
</dbReference>
<dbReference type="SUPFAM" id="SSF56112">
    <property type="entry name" value="Protein kinase-like (PK-like)"/>
    <property type="match status" value="1"/>
</dbReference>
<dbReference type="PROSITE" id="PS50011">
    <property type="entry name" value="PROTEIN_KINASE_DOM"/>
    <property type="match status" value="1"/>
</dbReference>
<dbReference type="PROSITE" id="PS00108">
    <property type="entry name" value="PROTEIN_KINASE_ST"/>
    <property type="match status" value="1"/>
</dbReference>
<organism>
    <name type="scientific">Arabidopsis thaliana</name>
    <name type="common">Mouse-ear cress</name>
    <dbReference type="NCBI Taxonomy" id="3702"/>
    <lineage>
        <taxon>Eukaryota</taxon>
        <taxon>Viridiplantae</taxon>
        <taxon>Streptophyta</taxon>
        <taxon>Embryophyta</taxon>
        <taxon>Tracheophyta</taxon>
        <taxon>Spermatophyta</taxon>
        <taxon>Magnoliopsida</taxon>
        <taxon>eudicotyledons</taxon>
        <taxon>Gunneridae</taxon>
        <taxon>Pentapetalae</taxon>
        <taxon>rosids</taxon>
        <taxon>malvids</taxon>
        <taxon>Brassicales</taxon>
        <taxon>Brassicaceae</taxon>
        <taxon>Camelineae</taxon>
        <taxon>Arabidopsis</taxon>
    </lineage>
</organism>
<proteinExistence type="evidence at protein level"/>
<accession>O64682</accession>
<comment type="function">
    <text evidence="4 5 7 8 9 10 11 12 13 14 15 16 17 18 19 20">Serine/threonine-protein kinase involved in the regulation of auxin signaling. Acts as a positive regulator of cellular auxin efflux and regulates organ development by enhancing polar auxin transport. Phosphorylates conserved serine residues in the PIN auxin efflux carriers. Phosphorylation of PIN proteins is required and sufficient for apical-basal PIN polarity that enables directional intercellular auxin fluxes, which mediate differential growth, tissue patterning and organogenesis. Phosphorylates PIN proteins (e.g. PIN1 and PIN2), especially when NPY proteins (e.g. NPY1/MAB4 and NPY5/MEL1) are recruited at the plasma membrane; this enhances the polarized localizations (apical or basal) of PINs in the cell by limiting their lateral diffusion-based escape (PubMed:33705718). Acts in association with PIN1 to control the establishment of bilateral symmetry and promotion of cotyledon outgrowth. Regulates root gravitropism through modulation of PIN2-dependent basipetal auxin transport. Required for polarization of PIN3-dependent auxin transport for hypocotyl gravitropic response. The protein kinase activity of PID is essential for its auxin efflux regulatory function. PID kinase and PP2A phosphatase activities antagonistically regulate phosphorylation of PIN proteins, affecting PIN sorting.</text>
</comment>
<comment type="catalytic activity">
    <reaction>
        <text>L-seryl-[protein] + ATP = O-phospho-L-seryl-[protein] + ADP + H(+)</text>
        <dbReference type="Rhea" id="RHEA:17989"/>
        <dbReference type="Rhea" id="RHEA-COMP:9863"/>
        <dbReference type="Rhea" id="RHEA-COMP:11604"/>
        <dbReference type="ChEBI" id="CHEBI:15378"/>
        <dbReference type="ChEBI" id="CHEBI:29999"/>
        <dbReference type="ChEBI" id="CHEBI:30616"/>
        <dbReference type="ChEBI" id="CHEBI:83421"/>
        <dbReference type="ChEBI" id="CHEBI:456216"/>
        <dbReference type="EC" id="2.7.11.1"/>
    </reaction>
</comment>
<comment type="catalytic activity">
    <reaction>
        <text>L-threonyl-[protein] + ATP = O-phospho-L-threonyl-[protein] + ADP + H(+)</text>
        <dbReference type="Rhea" id="RHEA:46608"/>
        <dbReference type="Rhea" id="RHEA-COMP:11060"/>
        <dbReference type="Rhea" id="RHEA-COMP:11605"/>
        <dbReference type="ChEBI" id="CHEBI:15378"/>
        <dbReference type="ChEBI" id="CHEBI:30013"/>
        <dbReference type="ChEBI" id="CHEBI:30616"/>
        <dbReference type="ChEBI" id="CHEBI:61977"/>
        <dbReference type="ChEBI" id="CHEBI:456216"/>
        <dbReference type="EC" id="2.7.11.1"/>
    </reaction>
</comment>
<comment type="activity regulation">
    <text evidence="10 11">Activated by magnesium and PDK1. Inhibited by staurosporine. Repressed by calcium.</text>
</comment>
<comment type="subunit">
    <text evidence="6 10 20">Interacts with PDK1, CML12 and PBP1 (PubMed:12857841, PubMed:16601102). Component of a complex made of PINs (e.g. PIN1 and PIN2), MAB4/MELs (e.g. NPY1/MAB4 and NPY5/MEL1) and AGC kinases (e.g. D6PK and PID) at the plasma membrane (PubMed:33705718). Binds directly to PIN2, NPY1/MAB4 and NPY5/MEL1 (PubMed:33705718).</text>
</comment>
<comment type="interaction">
    <interactant intactId="EBI-1393382">
        <id>O64682</id>
    </interactant>
    <interactant intactId="EBI-1238781">
        <id>P25071</id>
        <label>CML12</label>
    </interactant>
    <organismsDiffer>false</organismsDiffer>
    <experiments>4</experiments>
</comment>
<comment type="interaction">
    <interactant intactId="EBI-1393382">
        <id>O64682</id>
    </interactant>
    <interactant intactId="EBI-2128593">
        <id>Q9LPQ3</id>
        <label>MKK7</label>
    </interactant>
    <organismsDiffer>false</organismsDiffer>
    <experiments>3</experiments>
</comment>
<comment type="interaction">
    <interactant intactId="EBI-1393382">
        <id>O64682</id>
    </interactant>
    <interactant intactId="EBI-1393367">
        <id>Q9LSQ6</id>
        <label>PBP1</label>
    </interactant>
    <organismsDiffer>false</organismsDiffer>
    <experiments>4</experiments>
</comment>
<comment type="interaction">
    <interactant intactId="EBI-1393382">
        <id>O64682</id>
    </interactant>
    <interactant intactId="EBI-1103587">
        <id>Q9XF67</id>
        <label>PDPK1</label>
    </interactant>
    <organismsDiffer>false</organismsDiffer>
    <experiments>3</experiments>
</comment>
<comment type="interaction">
    <interactant intactId="EBI-1393382">
        <id>O64682</id>
    </interactant>
    <interactant intactId="EBI-1541799">
        <id>Q9C6B8</id>
        <label>PIN1</label>
    </interactant>
    <organismsDiffer>false</organismsDiffer>
    <experiments>2</experiments>
</comment>
<comment type="subcellular location">
    <subcellularLocation>
        <location evidence="11 12 15">Cytoplasm</location>
        <location evidence="11 12 15">Cytosol</location>
    </subcellularLocation>
    <subcellularLocation>
        <location evidence="20">Cell membrane</location>
    </subcellularLocation>
    <text>Targeted to the cell periphery.</text>
</comment>
<comment type="tissue specificity">
    <text evidence="5 11">Expressed in root hair cells, shoot xylem parenchyma cells and endodermis around the vasculature. Expressed in anther primordia, vasculature of the growing flower stalk, young pedicels and bracts and developing sepals, but not in petals. In pistils, transiently expressed in the vasculature of the style and the septum, and in the integuments and funiculus of the developing ovule.</text>
</comment>
<comment type="developmental stage">
    <text evidence="4">Expressed during embryogenesis at the globular stage on the apical flanks of the embryo, where the cotyledons are subsequently formed. Expression in the cotyledons persists at the heart stage until the mid-torpedo stage. At the bent-cotyledon stage, expressed weakly in the apical meristem. At the early phase of flowering, expressed in discrete groups of cells on the flanks of the apex initially marking the floral anlagen. During primordia differentiation, expressed in the adaxial portion of the primordia. In developing flowers, transiently expressed in nascent floral organs and then decreases as floral organs mature.</text>
</comment>
<comment type="induction">
    <text evidence="5 6">By auxin.</text>
</comment>
<comment type="PTM">
    <text>Autophosphorylated. Phosphorylated by PDK1.</text>
</comment>
<comment type="disruption phenotype">
    <text evidence="4 5 8 14 21">Pleiotropic defects in the development of floral organs, cotyledons and leaves, especially in the number of organs produced. Loss of function induces an apical-to-basal shift in PIN1 polar targeting at the inflorescence apex, accompanied by defective organogenesis.</text>
</comment>
<comment type="miscellaneous">
    <text>Plants overexpressing PID are small with dark green, curled leaves, with vegetative and floral organs defects and reduced apical dominance and internode elongation. Specific overexpression of PID in root hair cells suppresses root hair development. Over-expression of PID induces a basal-to-apical shift in PIN2 and PIN4 localization, resulting in the loss of auxin gradients and strong defects in embryo and seedling roots.</text>
</comment>
<comment type="similarity">
    <text evidence="1">Belongs to the protein kinase superfamily. Ser/Thr protein kinase family.</text>
</comment>
<evidence type="ECO:0000255" key="1">
    <source>
        <dbReference type="PROSITE-ProRule" id="PRU00159"/>
    </source>
</evidence>
<evidence type="ECO:0000255" key="2">
    <source>
        <dbReference type="PROSITE-ProRule" id="PRU10027"/>
    </source>
</evidence>
<evidence type="ECO:0000256" key="3">
    <source>
        <dbReference type="SAM" id="MobiDB-lite"/>
    </source>
</evidence>
<evidence type="ECO:0000269" key="4">
    <source>
    </source>
</evidence>
<evidence type="ECO:0000269" key="5">
    <source>
    </source>
</evidence>
<evidence type="ECO:0000269" key="6">
    <source>
    </source>
</evidence>
<evidence type="ECO:0000269" key="7">
    <source>
    </source>
</evidence>
<evidence type="ECO:0000269" key="8">
    <source>
    </source>
</evidence>
<evidence type="ECO:0000269" key="9">
    <source>
    </source>
</evidence>
<evidence type="ECO:0000269" key="10">
    <source>
    </source>
</evidence>
<evidence type="ECO:0000269" key="11">
    <source>
    </source>
</evidence>
<evidence type="ECO:0000269" key="12">
    <source>
    </source>
</evidence>
<evidence type="ECO:0000269" key="13">
    <source>
    </source>
</evidence>
<evidence type="ECO:0000269" key="14">
    <source>
    </source>
</evidence>
<evidence type="ECO:0000269" key="15">
    <source>
    </source>
</evidence>
<evidence type="ECO:0000269" key="16">
    <source>
    </source>
</evidence>
<evidence type="ECO:0000269" key="17">
    <source>
    </source>
</evidence>
<evidence type="ECO:0000269" key="18">
    <source>
    </source>
</evidence>
<evidence type="ECO:0000269" key="19">
    <source>
    </source>
</evidence>
<evidence type="ECO:0000269" key="20">
    <source>
    </source>
</evidence>
<evidence type="ECO:0000269" key="21">
    <source ref="4"/>
</evidence>
<evidence type="ECO:0000303" key="22">
    <source>
    </source>
</evidence>
<evidence type="ECO:0000312" key="23">
    <source>
        <dbReference type="Araport" id="AT2G34650"/>
    </source>
</evidence>
<evidence type="ECO:0000312" key="24">
    <source>
        <dbReference type="EMBL" id="AAC26704.1"/>
    </source>
</evidence>
<name>PID_ARATH</name>
<sequence>MLRESDGEMSLGTTNSPISSGTESCSSFSRLSFDAPPSTIPEEESFLSLKPHRSSDFAYAEIRRRKKQGLTFRDFRLMRRIGAGDIGTVYLCRLAGDEEESRSSYFAMKVVDKEALALKKKMHRAEMEKTILKMLDHPFLPTLYAEFEASHFSCIVMEYCSGGDLHSLRHRQPHRRFSLSSARFYAAEVLVALEYLHMLGIIYRDLKPENILVRSDGHIMLSDFDLSLCSDSIAAVESSSSSPENQQLRSPRRFTRLARLFQRVLRSKKVQTLEPTRLFVAEPVTARSGSFVGTHEYVAPEVASGGSHGNAVDWWAFGVFLYEMIYGKTPFVAPTNDVILRNIVKRQLSFPTDSPATMFELHARNLISGLLNKDPTKRLGSRRGAAEVKVHPFFKGLNFALIRTLTPPEIPSSVVKKPMKSATFSGRSSNKPAAFDYF</sequence>
<feature type="chain" id="PRO_0000411970" description="Protein kinase PINOID">
    <location>
        <begin position="1"/>
        <end position="438"/>
    </location>
</feature>
<feature type="domain" description="Protein kinase" evidence="1">
    <location>
        <begin position="75"/>
        <end position="394"/>
    </location>
</feature>
<feature type="domain" description="AGC-kinase C-terminal">
    <location>
        <begin position="395"/>
        <end position="438"/>
    </location>
</feature>
<feature type="region of interest" description="Disordered" evidence="3">
    <location>
        <begin position="1"/>
        <end position="24"/>
    </location>
</feature>
<feature type="compositionally biased region" description="Polar residues" evidence="3">
    <location>
        <begin position="11"/>
        <end position="24"/>
    </location>
</feature>
<feature type="active site" description="Proton acceptor" evidence="1 2">
    <location>
        <position position="205"/>
    </location>
</feature>
<feature type="binding site" evidence="1">
    <location>
        <begin position="81"/>
        <end position="89"/>
    </location>
    <ligand>
        <name>ATP</name>
        <dbReference type="ChEBI" id="CHEBI:30616"/>
    </ligand>
</feature>
<feature type="binding site" evidence="1">
    <location>
        <position position="109"/>
    </location>
    <ligand>
        <name>ATP</name>
        <dbReference type="ChEBI" id="CHEBI:30616"/>
    </ligand>
</feature>
<feature type="mutagenesis site" description="In pid-10; intermediate pid phenotype." evidence="4">
    <original>G</original>
    <variation>S</variation>
    <location>
        <position position="84"/>
    </location>
</feature>
<feature type="mutagenesis site" description="In pid-5 and pid-11; strong pid phenotype." evidence="4">
    <original>E</original>
    <variation>K</variation>
    <location>
        <position position="128"/>
    </location>
</feature>
<feature type="mutagenesis site" description="In pid-13; weak pid phenotype." evidence="4">
    <original>H</original>
    <variation>S</variation>
    <location>
        <position position="166"/>
    </location>
</feature>
<feature type="mutagenesis site" description="Loss of autophosphorylation. Loss of localization to the cell periphery." evidence="4 10 11">
    <original>D</original>
    <variation>A</variation>
    <location>
        <position position="205"/>
    </location>
</feature>
<feature type="mutagenesis site" description="Increases autophosphorylation activity." evidence="4">
    <original>D</original>
    <variation>G</variation>
    <location>
        <position position="225"/>
    </location>
</feature>
<feature type="mutagenesis site" description="In pid-3; strong pid phenotype." evidence="4">
    <original>L</original>
    <variation>F</variation>
    <location>
        <position position="226"/>
    </location>
</feature>
<feature type="mutagenesis site" description="Increases autophosphorylation activity. Loss of phosphorylation by PDK1." evidence="4 10">
    <original>SGS</original>
    <variation>EGE</variation>
    <location>
        <begin position="288"/>
        <end position="290"/>
    </location>
</feature>
<feature type="mutagenesis site" description="Loss of autophosphorylation." evidence="4">
    <original>T</original>
    <variation>E</variation>
    <location>
        <position position="294"/>
    </location>
</feature>
<feature type="mutagenesis site" description="In pid-8; weak pid phenotype." evidence="4">
    <original>P</original>
    <variation>Q</variation>
    <location>
        <position position="300"/>
    </location>
</feature>
<feature type="mutagenesis site" description="In pid-4 and pid-12; strong pid phenotype." evidence="4">
    <original>R</original>
    <variation>K</variation>
    <location>
        <position position="378"/>
    </location>
</feature>
<feature type="mutagenesis site" description="In pid-2; intermediate pid phenotype." evidence="4">
    <original>G</original>
    <variation>R</variation>
    <location>
        <position position="380"/>
    </location>
</feature>
<feature type="mutagenesis site" description="Decreases autophosphorylation 3-fold. Loss of phosphorylation by PDK1." evidence="10">
    <original>FDYF</original>
    <variation>VDYV</variation>
    <location>
        <begin position="435"/>
        <end position="438"/>
    </location>
</feature>
<keyword id="KW-0067">ATP-binding</keyword>
<keyword id="KW-0927">Auxin signaling pathway</keyword>
<keyword id="KW-1003">Cell membrane</keyword>
<keyword id="KW-0963">Cytoplasm</keyword>
<keyword id="KW-0217">Developmental protein</keyword>
<keyword id="KW-0418">Kinase</keyword>
<keyword id="KW-0472">Membrane</keyword>
<keyword id="KW-0547">Nucleotide-binding</keyword>
<keyword id="KW-1185">Reference proteome</keyword>
<keyword id="KW-0723">Serine/threonine-protein kinase</keyword>
<keyword id="KW-0808">Transferase</keyword>
<protein>
    <recommendedName>
        <fullName evidence="22">Protein kinase PINOID</fullName>
        <ecNumber>2.7.11.1</ecNumber>
    </recommendedName>
    <alternativeName>
        <fullName>Protein kinase ABRUPTUS</fullName>
    </alternativeName>
</protein>
<reference key="1">
    <citation type="journal article" date="2000" name="Cell">
        <title>Regulation of auxin response by the protein kinase PINOID.</title>
        <authorList>
            <person name="Christensen S.K."/>
            <person name="Dagenais N."/>
            <person name="Chory J."/>
            <person name="Weigel D."/>
        </authorList>
    </citation>
    <scope>NUCLEOTIDE SEQUENCE [MRNA]</scope>
    <scope>FUNCTION</scope>
    <scope>AUTOPHOSPHORYLATION</scope>
    <scope>DEVELOPMENTAL STAGE</scope>
    <scope>DISRUPTION PHENOTYPE</scope>
    <scope>MUTAGENESIS OF GLY-84; GLU-128; HIS-166; ASP-205; ASP-225; LEU-226; 288-SER--SER-290; THR-294; PRO-300; ARG-378 AND GLY-380</scope>
    <source>
        <strain>cv. Columbia</strain>
    </source>
</reference>
<reference key="2">
    <citation type="journal article" date="1999" name="Nature">
        <title>Sequence and analysis of chromosome 2 of the plant Arabidopsis thaliana.</title>
        <authorList>
            <person name="Lin X."/>
            <person name="Kaul S."/>
            <person name="Rounsley S.D."/>
            <person name="Shea T.P."/>
            <person name="Benito M.-I."/>
            <person name="Town C.D."/>
            <person name="Fujii C.Y."/>
            <person name="Mason T.M."/>
            <person name="Bowman C.L."/>
            <person name="Barnstead M.E."/>
            <person name="Feldblyum T.V."/>
            <person name="Buell C.R."/>
            <person name="Ketchum K.A."/>
            <person name="Lee J.J."/>
            <person name="Ronning C.M."/>
            <person name="Koo H.L."/>
            <person name="Moffat K.S."/>
            <person name="Cronin L.A."/>
            <person name="Shen M."/>
            <person name="Pai G."/>
            <person name="Van Aken S."/>
            <person name="Umayam L."/>
            <person name="Tallon L.J."/>
            <person name="Gill J.E."/>
            <person name="Adams M.D."/>
            <person name="Carrera A.J."/>
            <person name="Creasy T.H."/>
            <person name="Goodman H.M."/>
            <person name="Somerville C.R."/>
            <person name="Copenhaver G.P."/>
            <person name="Preuss D."/>
            <person name="Nierman W.C."/>
            <person name="White O."/>
            <person name="Eisen J.A."/>
            <person name="Salzberg S.L."/>
            <person name="Fraser C.M."/>
            <person name="Venter J.C."/>
        </authorList>
    </citation>
    <scope>NUCLEOTIDE SEQUENCE [LARGE SCALE GENOMIC DNA]</scope>
    <source>
        <strain>cv. Columbia</strain>
    </source>
</reference>
<reference key="3">
    <citation type="journal article" date="2017" name="Plant J.">
        <title>Araport11: a complete reannotation of the Arabidopsis thaliana reference genome.</title>
        <authorList>
            <person name="Cheng C.Y."/>
            <person name="Krishnakumar V."/>
            <person name="Chan A.P."/>
            <person name="Thibaud-Nissen F."/>
            <person name="Schobel S."/>
            <person name="Town C.D."/>
        </authorList>
    </citation>
    <scope>GENOME REANNOTATION</scope>
    <source>
        <strain>cv. Columbia</strain>
    </source>
</reference>
<reference key="4">
    <citation type="journal article" date="1995" name="Plant J.">
        <title>Morphogenesis in pinoid mutants of Arabidopsis thaliana.</title>
        <authorList>
            <person name="Bennett S.R.M."/>
            <person name="Alvarez J."/>
            <person name="Bossinger G."/>
            <person name="Smyth D.R."/>
        </authorList>
    </citation>
    <scope>DISRUPTION PHENOTYPE</scope>
</reference>
<reference key="5">
    <citation type="journal article" date="2001" name="Development">
        <title>The PINOID protein kinase regulates organ development in Arabidopsis by enhancing polar auxin transport.</title>
        <authorList>
            <person name="Benjamins R."/>
            <person name="Quint A."/>
            <person name="Weijers D."/>
            <person name="Hooykaas P."/>
            <person name="Offringa R."/>
        </authorList>
    </citation>
    <scope>FUNCTION</scope>
    <scope>TISSUE SPECIFICITY</scope>
    <scope>INDUCTION BY AUXIN</scope>
    <scope>DISRUPTION PHENOTYPE</scope>
</reference>
<reference key="6">
    <citation type="journal article" date="2003" name="Plant Physiol.">
        <title>PINOID-mediated signaling involves calcium-binding proteins.</title>
        <authorList>
            <person name="Benjamins R."/>
            <person name="Ampudia C.S."/>
            <person name="Hooykaas P.J."/>
            <person name="Offringa R."/>
        </authorList>
    </citation>
    <scope>INTERACTION WITH CML12 AND PBP1</scope>
    <scope>INDUCTION BY AUXIN</scope>
</reference>
<reference key="7">
    <citation type="journal article" date="2004" name="Development">
        <title>PIN-FORMED1 and PINOID regulate boundary formation and cotyledon development in Arabidopsis embryogenesis.</title>
        <authorList>
            <person name="Furutani M."/>
            <person name="Vernoux T."/>
            <person name="Traas J."/>
            <person name="Kato T."/>
            <person name="Tasaka M."/>
            <person name="Aida M."/>
        </authorList>
    </citation>
    <scope>FUNCTION</scope>
</reference>
<reference key="8">
    <citation type="journal article" date="2004" name="Science">
        <title>A PINOID-dependent binary switch in apical-basal PIN polar targeting directs auxin efflux.</title>
        <authorList>
            <person name="Friml J."/>
            <person name="Yang X."/>
            <person name="Michniewicz M."/>
            <person name="Weijers D."/>
            <person name="Quint A."/>
            <person name="Tietz O."/>
            <person name="Benjamins R."/>
            <person name="Ouwerkerk P.B."/>
            <person name="Ljung K."/>
            <person name="Sandberg G."/>
            <person name="Hooykaas P.J."/>
            <person name="Palme K."/>
            <person name="Offringa R."/>
        </authorList>
    </citation>
    <scope>FUNCTION</scope>
    <scope>DISRUPTION PHENOTYPE</scope>
</reference>
<reference key="9">
    <citation type="journal article" date="2005" name="Development">
        <title>The gene ENHANCER OF PINOID controls cotyledon development in the Arabidopsis embryo.</title>
        <authorList>
            <person name="Treml B.S."/>
            <person name="Winderl S."/>
            <person name="Radykewicz R."/>
            <person name="Herz M."/>
            <person name="Schweizer G."/>
            <person name="Hutzler P."/>
            <person name="Glawischnig E."/>
            <person name="Ruiz R.A."/>
        </authorList>
    </citation>
    <scope>FUNCTION</scope>
</reference>
<reference key="10">
    <citation type="journal article" date="2006" name="Plant Cell">
        <title>PINOID positively regulates auxin efflux in Arabidopsis root hair cells and tobacco cells.</title>
        <authorList>
            <person name="Lee S.H."/>
            <person name="Cho H.T."/>
        </authorList>
    </citation>
    <scope>FUNCTION</scope>
    <scope>ACTIVITY REGULATION</scope>
    <scope>SUBCELLULAR LOCATION</scope>
    <scope>TISSUE SPECIFICITY</scope>
    <scope>MUTAGENESIS OF ASP-205</scope>
</reference>
<reference key="11">
    <citation type="journal article" date="2006" name="Proc. Natl. Acad. Sci. U.S.A.">
        <title>Phosphorylation and activation of PINOID by the phospholipid signaling kinase 3-phosphoinositide-dependent protein kinase 1 (PDK1) in Arabidopsis.</title>
        <authorList>
            <person name="Zegzouti H."/>
            <person name="Anthony R.G."/>
            <person name="Jahchan N."/>
            <person name="Boegre L."/>
            <person name="Christensen S.K."/>
        </authorList>
    </citation>
    <scope>FUNCTION</scope>
    <scope>INTERACTION WITH PDK1</scope>
    <scope>ACTIVITY REGULATION</scope>
    <scope>MUTAGENESIS OF ASP-205; 288-SER--SER-290 AND 435-PHE--PHE-438</scope>
</reference>
<reference key="12">
    <citation type="journal article" date="2007" name="Cell">
        <title>Antagonistic regulation of PIN phosphorylation by PP2A and PINOID directs auxin flux.</title>
        <authorList>
            <person name="Michniewicz M."/>
            <person name="Zago M.K."/>
            <person name="Abas L."/>
            <person name="Weijers D."/>
            <person name="Schweighofer A."/>
            <person name="Meskiene I."/>
            <person name="Heisler M.G."/>
            <person name="Ohno C."/>
            <person name="Zhang J."/>
            <person name="Huang F."/>
            <person name="Schwab R."/>
            <person name="Weigel D."/>
            <person name="Meyerowitz E.M."/>
            <person name="Luschnig C."/>
            <person name="Offringa R."/>
            <person name="Friml J."/>
        </authorList>
    </citation>
    <scope>FUNCTION</scope>
    <scope>SUBCELLULAR LOCATION</scope>
</reference>
<reference key="13">
    <citation type="journal article" date="2008" name="Proc. Natl. Acad. Sci. U.S.A.">
        <title>NPY genes and AGC kinases define two key steps in auxin-mediated organogenesis in Arabidopsis.</title>
        <authorList>
            <person name="Cheng Y."/>
            <person name="Qin G."/>
            <person name="Dai X."/>
            <person name="Zhao Y."/>
        </authorList>
    </citation>
    <scope>FUNCTION</scope>
</reference>
<reference key="14">
    <citation type="journal article" date="2009" name="Plant Cell">
        <title>PIN auxin efflux carrier polarity is regulated by PINOID kinase-mediated recruitment into GNOM-independent trafficking in Arabidopsis.</title>
        <authorList>
            <person name="Kleine-Vehn J."/>
            <person name="Huang F."/>
            <person name="Naramoto S."/>
            <person name="Zhang J."/>
            <person name="Michniewicz M."/>
            <person name="Offringa R."/>
            <person name="Friml J."/>
        </authorList>
    </citation>
    <scope>FUNCTION</scope>
    <scope>SUBCELLULAR LOCATION</scope>
</reference>
<reference key="15">
    <citation type="journal article" date="2009" name="Plant Physiol.">
        <title>PINOID kinase regulates root gravitropism through modulation of PIN2-dependent basipetal auxin transport in Arabidopsis.</title>
        <authorList>
            <person name="Sukumar P."/>
            <person name="Edwards K.S."/>
            <person name="Rahman A."/>
            <person name="Delong A."/>
            <person name="Muday G.K."/>
        </authorList>
    </citation>
    <scope>FUNCTION</scope>
    <scope>DISRUPTION PHENOTYPE</scope>
</reference>
<reference key="16">
    <citation type="journal article" date="2010" name="Plant Cell">
        <title>Phosphorylation of conserved PIN motifs directs Arabidopsis PIN1 polarity and auxin transport.</title>
        <authorList>
            <person name="Huang F."/>
            <person name="Zago M.K."/>
            <person name="Abas L."/>
            <person name="van Marion A."/>
            <person name="Galvan-Ampudia C.S."/>
            <person name="Offringa R."/>
        </authorList>
    </citation>
    <scope>FUNCTION</scope>
</reference>
<reference key="17">
    <citation type="journal article" date="2010" name="Proc. Natl. Acad. Sci. U.S.A.">
        <title>PIN phosphorylation is sufficient to mediate PIN polarity and direct auxin transport.</title>
        <authorList>
            <person name="Zhang J."/>
            <person name="Nodzynski T."/>
            <person name="Pencik A."/>
            <person name="Rolcik J."/>
            <person name="Friml J."/>
        </authorList>
    </citation>
    <scope>FUNCTION</scope>
</reference>
<reference key="18">
    <citation type="journal article" date="2011" name="Cell Res.">
        <title>Phosphorylation switch modulates the interdigitated pattern of PIN1 localization and cell expansion in Arabidopsis leaf epidermis.</title>
        <authorList>
            <person name="Li H."/>
            <person name="Lin D."/>
            <person name="Dhonukshe P."/>
            <person name="Nagawa S."/>
            <person name="Chen D."/>
            <person name="Friml J."/>
            <person name="Scheres B."/>
            <person name="Guo H."/>
            <person name="Yang Z."/>
        </authorList>
    </citation>
    <scope>FUNCTION</scope>
</reference>
<reference key="19">
    <citation type="journal article" date="2011" name="Plant J.">
        <title>Polarization of PIN3-dependent auxin transport for hypocotyl gravitropic response in Arabidopsis thaliana.</title>
        <authorList>
            <person name="Rakusova H."/>
            <person name="Gallego-Bartolome J."/>
            <person name="Vanstraelen M."/>
            <person name="Robert H.S."/>
            <person name="Alabadi D."/>
            <person name="Blazquez M.A."/>
            <person name="Benkova E."/>
            <person name="Friml J."/>
        </authorList>
    </citation>
    <scope>FUNCTION</scope>
</reference>
<reference key="20">
    <citation type="journal article" date="2021" name="Curr. Biol.">
        <title>AGC kinases and MAB4/MEL proteins maintain PIN polarity by limiting lateral diffusion in plant cells.</title>
        <authorList>
            <person name="Glanc M."/>
            <person name="Van Gelderen K."/>
            <person name="Hoermayer L."/>
            <person name="Tan S."/>
            <person name="Naramoto S."/>
            <person name="Zhang X."/>
            <person name="Domjan D."/>
            <person name="Vcelarova L."/>
            <person name="Hauschild R."/>
            <person name="Johnson A."/>
            <person name="de Koning E."/>
            <person name="van Dop M."/>
            <person name="Rademacher E."/>
            <person name="Janson S."/>
            <person name="Wei X."/>
            <person name="Molnar G."/>
            <person name="Fendrych M."/>
            <person name="De Rybel B."/>
            <person name="Offringa R."/>
            <person name="Friml J."/>
        </authorList>
    </citation>
    <scope>FUNCTION</scope>
    <scope>SUBUNIT</scope>
    <scope>INTERACTION WITH PIN2; NPY1/MAB4 AND NPY5/MEL1</scope>
    <scope>SUBCELLULAR LOCATION</scope>
    <source>
        <strain>cv. Columbia</strain>
    </source>
</reference>
<gene>
    <name evidence="22" type="primary">PID</name>
    <name type="synonym">ABR</name>
    <name evidence="23" type="ordered locus">At2g34650</name>
    <name evidence="24" type="ORF">T31E10.1</name>
</gene>